<gene>
    <name type="primary">rbm47</name>
    <name type="ORF">si:ch211-241e15.2</name>
</gene>
<accession>A0A8M1NHK4</accession>
<accession>A2BIC5</accession>
<keyword id="KW-0963">Cytoplasm</keyword>
<keyword id="KW-0488">Methylation</keyword>
<keyword id="KW-0507">mRNA processing</keyword>
<keyword id="KW-0508">mRNA splicing</keyword>
<keyword id="KW-0539">Nucleus</keyword>
<keyword id="KW-1185">Reference proteome</keyword>
<keyword id="KW-0677">Repeat</keyword>
<keyword id="KW-0694">RNA-binding</keyword>
<sequence length="600" mass="65521">MTAEDSASAVAMSNPSPSSSSKSSSGHPQHHCTVPEGVAGAPNEAALVSLMERSGYGMVQENGQRKYGPPPGWQGTSPPRGCEIFVGKIPRDVYEDELVPVFESVGRIYEMRLMMDFDGKNRGYAFVMYTQKHEAKRAVRELNNFEIRPGRLLGVCSSVDNCRLFIGGIPKTKKREEILEEVSKVTEGVLDVIVYASAADKMKNRGFAFVEYESHRAAAMARRKLMPGRIQLWGHQIAVDWAEPEIDVDEDVMETVKILYVRNLMIETSEEILRQTFGQFNPGCVERVKKIRDYAFVHFASRDDAVVAMDNLNGTEIEGSRIEVTLAKPVDKEQYTRYQKASKGTAAATTVESTQQSYVYQCDPYTLAYYGYPYNTLIGPNRDYFIKGTVRGRGRAGASSRGPGPRGSYLGGYSAGRGIYSRYHEGKTKLPDKPYEIMSNLELAAVNPVGIKPGTMALPALGAQYPTVFSAAPATKLMEEGKIHPVEHLINPLALQHDPTAASATAAVIPAVSTPPPFQGRPITPVYAMAHNIQRIPAAAASLYGAGYMPIAAHANTATLAALQKNAAVAAAYGGYAGYMPQAFPAATFQMPIHDVYQTY</sequence>
<reference key="1">
    <citation type="journal article" date="2013" name="Nature">
        <title>The zebrafish reference genome sequence and its relationship to the human genome.</title>
        <authorList>
            <person name="Howe K."/>
            <person name="Clark M.D."/>
            <person name="Torroja C.F."/>
            <person name="Torrance J."/>
            <person name="Berthelot C."/>
            <person name="Muffato M."/>
            <person name="Collins J.E."/>
            <person name="Humphray S."/>
            <person name="McLaren K."/>
            <person name="Matthews L."/>
            <person name="McLaren S."/>
            <person name="Sealy I."/>
            <person name="Caccamo M."/>
            <person name="Churcher C."/>
            <person name="Scott C."/>
            <person name="Barrett J.C."/>
            <person name="Koch R."/>
            <person name="Rauch G.J."/>
            <person name="White S."/>
            <person name="Chow W."/>
            <person name="Kilian B."/>
            <person name="Quintais L.T."/>
            <person name="Guerra-Assuncao J.A."/>
            <person name="Zhou Y."/>
            <person name="Gu Y."/>
            <person name="Yen J."/>
            <person name="Vogel J.H."/>
            <person name="Eyre T."/>
            <person name="Redmond S."/>
            <person name="Banerjee R."/>
            <person name="Chi J."/>
            <person name="Fu B."/>
            <person name="Langley E."/>
            <person name="Maguire S.F."/>
            <person name="Laird G.K."/>
            <person name="Lloyd D."/>
            <person name="Kenyon E."/>
            <person name="Donaldson S."/>
            <person name="Sehra H."/>
            <person name="Almeida-King J."/>
            <person name="Loveland J."/>
            <person name="Trevanion S."/>
            <person name="Jones M."/>
            <person name="Quail M."/>
            <person name="Willey D."/>
            <person name="Hunt A."/>
            <person name="Burton J."/>
            <person name="Sims S."/>
            <person name="McLay K."/>
            <person name="Plumb B."/>
            <person name="Davis J."/>
            <person name="Clee C."/>
            <person name="Oliver K."/>
            <person name="Clark R."/>
            <person name="Riddle C."/>
            <person name="Elliot D."/>
            <person name="Threadgold G."/>
            <person name="Harden G."/>
            <person name="Ware D."/>
            <person name="Begum S."/>
            <person name="Mortimore B."/>
            <person name="Kerry G."/>
            <person name="Heath P."/>
            <person name="Phillimore B."/>
            <person name="Tracey A."/>
            <person name="Corby N."/>
            <person name="Dunn M."/>
            <person name="Johnson C."/>
            <person name="Wood J."/>
            <person name="Clark S."/>
            <person name="Pelan S."/>
            <person name="Griffiths G."/>
            <person name="Smith M."/>
            <person name="Glithero R."/>
            <person name="Howden P."/>
            <person name="Barker N."/>
            <person name="Lloyd C."/>
            <person name="Stevens C."/>
            <person name="Harley J."/>
            <person name="Holt K."/>
            <person name="Panagiotidis G."/>
            <person name="Lovell J."/>
            <person name="Beasley H."/>
            <person name="Henderson C."/>
            <person name="Gordon D."/>
            <person name="Auger K."/>
            <person name="Wright D."/>
            <person name="Collins J."/>
            <person name="Raisen C."/>
            <person name="Dyer L."/>
            <person name="Leung K."/>
            <person name="Robertson L."/>
            <person name="Ambridge K."/>
            <person name="Leongamornlert D."/>
            <person name="McGuire S."/>
            <person name="Gilderthorp R."/>
            <person name="Griffiths C."/>
            <person name="Manthravadi D."/>
            <person name="Nichol S."/>
            <person name="Barker G."/>
            <person name="Whitehead S."/>
            <person name="Kay M."/>
            <person name="Brown J."/>
            <person name="Murnane C."/>
            <person name="Gray E."/>
            <person name="Humphries M."/>
            <person name="Sycamore N."/>
            <person name="Barker D."/>
            <person name="Saunders D."/>
            <person name="Wallis J."/>
            <person name="Babbage A."/>
            <person name="Hammond S."/>
            <person name="Mashreghi-Mohammadi M."/>
            <person name="Barr L."/>
            <person name="Martin S."/>
            <person name="Wray P."/>
            <person name="Ellington A."/>
            <person name="Matthews N."/>
            <person name="Ellwood M."/>
            <person name="Woodmansey R."/>
            <person name="Clark G."/>
            <person name="Cooper J."/>
            <person name="Tromans A."/>
            <person name="Grafham D."/>
            <person name="Skuce C."/>
            <person name="Pandian R."/>
            <person name="Andrews R."/>
            <person name="Harrison E."/>
            <person name="Kimberley A."/>
            <person name="Garnett J."/>
            <person name="Fosker N."/>
            <person name="Hall R."/>
            <person name="Garner P."/>
            <person name="Kelly D."/>
            <person name="Bird C."/>
            <person name="Palmer S."/>
            <person name="Gehring I."/>
            <person name="Berger A."/>
            <person name="Dooley C.M."/>
            <person name="Ersan-Urun Z."/>
            <person name="Eser C."/>
            <person name="Geiger H."/>
            <person name="Geisler M."/>
            <person name="Karotki L."/>
            <person name="Kirn A."/>
            <person name="Konantz J."/>
            <person name="Konantz M."/>
            <person name="Oberlander M."/>
            <person name="Rudolph-Geiger S."/>
            <person name="Teucke M."/>
            <person name="Lanz C."/>
            <person name="Raddatz G."/>
            <person name="Osoegawa K."/>
            <person name="Zhu B."/>
            <person name="Rapp A."/>
            <person name="Widaa S."/>
            <person name="Langford C."/>
            <person name="Yang F."/>
            <person name="Schuster S.C."/>
            <person name="Carter N.P."/>
            <person name="Harrow J."/>
            <person name="Ning Z."/>
            <person name="Herrero J."/>
            <person name="Searle S.M."/>
            <person name="Enright A."/>
            <person name="Geisler R."/>
            <person name="Plasterk R.H."/>
            <person name="Lee C."/>
            <person name="Westerfield M."/>
            <person name="de Jong P.J."/>
            <person name="Zon L.I."/>
            <person name="Postlethwait J.H."/>
            <person name="Nusslein-Volhard C."/>
            <person name="Hubbard T.J."/>
            <person name="Roest Crollius H."/>
            <person name="Rogers J."/>
            <person name="Stemple D.L."/>
        </authorList>
    </citation>
    <scope>NUCLEOTIDE SEQUENCE [LARGE SCALE GENOMIC DNA]</scope>
    <source>
        <strain>Tuebingen</strain>
    </source>
</reference>
<reference key="2">
    <citation type="journal article" date="2013" name="Dev. Dyn.">
        <title>rbm47, a novel RNA binding protein, regulates zebrafish head development.</title>
        <authorList>
            <person name="Guan R."/>
            <person name="El-Rass S."/>
            <person name="Spillane D."/>
            <person name="Lam S."/>
            <person name="Wang Y."/>
            <person name="Wu J."/>
            <person name="Chen Z."/>
            <person name="Wang A."/>
            <person name="Jia Z."/>
            <person name="Keating A."/>
            <person name="Hu J."/>
            <person name="Wen X.Y."/>
        </authorList>
    </citation>
    <scope>DISRUPTION PHENOTYPE</scope>
</reference>
<reference key="3">
    <citation type="journal article" date="2020" name="J. Immunol.">
        <title>Zebrafish RBM47 Promotes Lysosome-Dependent Degradation of MAVS to Inhibit IFN Induction.</title>
        <authorList>
            <person name="Lu L.F."/>
            <person name="Zhang C."/>
            <person name="Zhou X.Y."/>
            <person name="Li Z.C."/>
            <person name="Chen D.D."/>
            <person name="Zhou Y."/>
            <person name="Zhou F."/>
            <person name="Zhang Y.A."/>
            <person name="Li S."/>
        </authorList>
    </citation>
    <scope>FUNCTION</scope>
    <scope>INTERACTION WITH MAVS</scope>
    <scope>INDUCTION</scope>
</reference>
<protein>
    <recommendedName>
        <fullName evidence="1">RNA-binding protein 47</fullName>
    </recommendedName>
    <alternativeName>
        <fullName evidence="1">RNA-binding motif protein 47</fullName>
    </alternativeName>
</protein>
<organism>
    <name type="scientific">Danio rerio</name>
    <name type="common">Zebrafish</name>
    <name type="synonym">Brachydanio rerio</name>
    <dbReference type="NCBI Taxonomy" id="7955"/>
    <lineage>
        <taxon>Eukaryota</taxon>
        <taxon>Metazoa</taxon>
        <taxon>Chordata</taxon>
        <taxon>Craniata</taxon>
        <taxon>Vertebrata</taxon>
        <taxon>Euteleostomi</taxon>
        <taxon>Actinopterygii</taxon>
        <taxon>Neopterygii</taxon>
        <taxon>Teleostei</taxon>
        <taxon>Ostariophysi</taxon>
        <taxon>Cypriniformes</taxon>
        <taxon>Danionidae</taxon>
        <taxon>Danioninae</taxon>
        <taxon>Danio</taxon>
    </lineage>
</organism>
<feature type="chain" id="PRO_0000457208" description="RNA-binding protein 47">
    <location>
        <begin position="1"/>
        <end position="600"/>
    </location>
</feature>
<feature type="domain" description="RRM 1" evidence="3">
    <location>
        <begin position="82"/>
        <end position="160"/>
    </location>
</feature>
<feature type="domain" description="RRM 2" evidence="3">
    <location>
        <begin position="162"/>
        <end position="244"/>
    </location>
</feature>
<feature type="domain" description="RRM 3" evidence="3">
    <location>
        <begin position="257"/>
        <end position="329"/>
    </location>
</feature>
<feature type="region of interest" description="Disordered" evidence="4">
    <location>
        <begin position="1"/>
        <end position="37"/>
    </location>
</feature>
<feature type="compositionally biased region" description="Low complexity" evidence="4">
    <location>
        <begin position="1"/>
        <end position="25"/>
    </location>
</feature>
<proteinExistence type="evidence at protein level"/>
<name>RBM47_DANRE</name>
<evidence type="ECO:0000250" key="1">
    <source>
        <dbReference type="UniProtKB" id="A0AV96"/>
    </source>
</evidence>
<evidence type="ECO:0000250" key="2">
    <source>
        <dbReference type="UniProtKB" id="Q91WT8"/>
    </source>
</evidence>
<evidence type="ECO:0000255" key="3">
    <source>
        <dbReference type="PROSITE-ProRule" id="PRU00176"/>
    </source>
</evidence>
<evidence type="ECO:0000256" key="4">
    <source>
        <dbReference type="SAM" id="MobiDB-lite"/>
    </source>
</evidence>
<evidence type="ECO:0000269" key="5">
    <source>
    </source>
</evidence>
<evidence type="ECO:0000269" key="6">
    <source>
    </source>
</evidence>
<evidence type="ECO:0000305" key="7"/>
<comment type="function">
    <text evidence="1 6">Single-stranded RNA-binding protein that functions in a variety of RNA processes, including alternative splicing, RNA stabilization, and RNA editing (By similarity). Independently of its RNA-binding activity, could negatively regulate MAVS by promoting its lysosomal degradation (PubMed:32859727).</text>
</comment>
<comment type="subunit">
    <text evidence="1 6">Homodimer (By similarity). May interact with MAVS; may regulate MAVS lysosomal degradation (PubMed:32859727).</text>
</comment>
<comment type="subcellular location">
    <subcellularLocation>
        <location evidence="1">Nucleus</location>
    </subcellularLocation>
    <subcellularLocation>
        <location evidence="1">Cytoplasm</location>
    </subcellularLocation>
</comment>
<comment type="induction">
    <text evidence="6">Up-regulated upon viral infection.</text>
</comment>
<comment type="domain">
    <text evidence="2 6">The RRM domains are required for mRNA stabilization (By similarity). The RRM domains mediate interaction with MAVS (PubMed:32859727).</text>
</comment>
<comment type="disruption phenotype">
    <text evidence="5">Morpholino knockdown of the protein prevents head development.</text>
</comment>
<comment type="similarity">
    <text evidence="7">Belongs to the RRM RBM47 family.</text>
</comment>
<dbReference type="EMBL" id="BX901913">
    <property type="status" value="NOT_ANNOTATED_CDS"/>
    <property type="molecule type" value="Genomic_DNA"/>
</dbReference>
<dbReference type="RefSeq" id="NP_001108158.1">
    <property type="nucleotide sequence ID" value="NM_001114686.2"/>
</dbReference>
<dbReference type="SMR" id="A0A8M1NHK4"/>
<dbReference type="FunCoup" id="A0A8M1NHK4">
    <property type="interactions" value="291"/>
</dbReference>
<dbReference type="STRING" id="7955.ENSDARP00000116938"/>
<dbReference type="PaxDb" id="7955-ENSDARP00000083503"/>
<dbReference type="Ensembl" id="ENSDART00000135552">
    <property type="protein sequence ID" value="ENSDARP00000116938"/>
    <property type="gene ID" value="ENSDARG00000061985"/>
</dbReference>
<dbReference type="GeneID" id="562991"/>
<dbReference type="KEGG" id="dre:562991"/>
<dbReference type="AGR" id="ZFIN:ZDB-GENE-030131-9612"/>
<dbReference type="CTD" id="54502"/>
<dbReference type="ZFIN" id="ZDB-GENE-030131-9612">
    <property type="gene designation" value="rbm47"/>
</dbReference>
<dbReference type="eggNOG" id="KOG0117">
    <property type="taxonomic scope" value="Eukaryota"/>
</dbReference>
<dbReference type="HOGENOM" id="CLU_022960_4_2_1"/>
<dbReference type="OMA" id="VEHMINP"/>
<dbReference type="OrthoDB" id="3800936at2759"/>
<dbReference type="PRO" id="PR:A0A8M1NHK4"/>
<dbReference type="Proteomes" id="UP000000437">
    <property type="component" value="Chromosome 1"/>
</dbReference>
<dbReference type="Bgee" id="ENSDARG00000061985">
    <property type="expression patterns" value="Expressed in intestine and 22 other cell types or tissues"/>
</dbReference>
<dbReference type="GO" id="GO:0005764">
    <property type="term" value="C:lysosome"/>
    <property type="evidence" value="ECO:0007669"/>
    <property type="project" value="GOC"/>
</dbReference>
<dbReference type="GO" id="GO:0005634">
    <property type="term" value="C:nucleus"/>
    <property type="evidence" value="ECO:0000318"/>
    <property type="project" value="GO_Central"/>
</dbReference>
<dbReference type="GO" id="GO:0003729">
    <property type="term" value="F:mRNA binding"/>
    <property type="evidence" value="ECO:0000318"/>
    <property type="project" value="GO_Central"/>
</dbReference>
<dbReference type="GO" id="GO:0140374">
    <property type="term" value="P:antiviral innate immune response"/>
    <property type="evidence" value="ECO:0000315"/>
    <property type="project" value="UniProtKB"/>
</dbReference>
<dbReference type="GO" id="GO:0060322">
    <property type="term" value="P:head development"/>
    <property type="evidence" value="ECO:0000315"/>
    <property type="project" value="ZFIN"/>
</dbReference>
<dbReference type="GO" id="GO:1905146">
    <property type="term" value="P:lysosomal protein catabolic process"/>
    <property type="evidence" value="ECO:0000315"/>
    <property type="project" value="UniProtKB"/>
</dbReference>
<dbReference type="GO" id="GO:0006397">
    <property type="term" value="P:mRNA processing"/>
    <property type="evidence" value="ECO:0007669"/>
    <property type="project" value="UniProtKB-KW"/>
</dbReference>
<dbReference type="GO" id="GO:2000742">
    <property type="term" value="P:regulation of anterior head development"/>
    <property type="evidence" value="ECO:0000316"/>
    <property type="project" value="ZFIN"/>
</dbReference>
<dbReference type="GO" id="GO:0008380">
    <property type="term" value="P:RNA splicing"/>
    <property type="evidence" value="ECO:0007669"/>
    <property type="project" value="UniProtKB-KW"/>
</dbReference>
<dbReference type="CDD" id="cd12485">
    <property type="entry name" value="RRM1_RBM47"/>
    <property type="match status" value="1"/>
</dbReference>
<dbReference type="CDD" id="cd12491">
    <property type="entry name" value="RRM2_RBM47"/>
    <property type="match status" value="1"/>
</dbReference>
<dbReference type="FunFam" id="3.30.70.330:FF:000022">
    <property type="entry name" value="APOBEC1 complementation factor isoform X1"/>
    <property type="match status" value="1"/>
</dbReference>
<dbReference type="FunFam" id="3.30.70.330:FF:000026">
    <property type="entry name" value="APOBEC1 complementation factor isoform X1"/>
    <property type="match status" value="1"/>
</dbReference>
<dbReference type="FunFam" id="3.30.70.330:FF:000146">
    <property type="entry name" value="RNA-binding protein 47 isoform X1"/>
    <property type="match status" value="1"/>
</dbReference>
<dbReference type="Gene3D" id="3.30.70.330">
    <property type="match status" value="3"/>
</dbReference>
<dbReference type="InterPro" id="IPR006535">
    <property type="entry name" value="HnRNP_R/Q_splicing_fac"/>
</dbReference>
<dbReference type="InterPro" id="IPR012677">
    <property type="entry name" value="Nucleotide-bd_a/b_plait_sf"/>
</dbReference>
<dbReference type="InterPro" id="IPR035979">
    <property type="entry name" value="RBD_domain_sf"/>
</dbReference>
<dbReference type="InterPro" id="IPR047044">
    <property type="entry name" value="RBM47_RRM1"/>
</dbReference>
<dbReference type="InterPro" id="IPR034440">
    <property type="entry name" value="RBM47_RRM2"/>
</dbReference>
<dbReference type="InterPro" id="IPR000504">
    <property type="entry name" value="RRM_dom"/>
</dbReference>
<dbReference type="NCBIfam" id="TIGR01648">
    <property type="entry name" value="hnRNP-R-Q"/>
    <property type="match status" value="1"/>
</dbReference>
<dbReference type="PANTHER" id="PTHR21245">
    <property type="entry name" value="HETEROGENEOUS NUCLEAR RIBONUCLEOPROTEIN"/>
    <property type="match status" value="1"/>
</dbReference>
<dbReference type="Pfam" id="PF00076">
    <property type="entry name" value="RRM_1"/>
    <property type="match status" value="3"/>
</dbReference>
<dbReference type="SMART" id="SM00360">
    <property type="entry name" value="RRM"/>
    <property type="match status" value="3"/>
</dbReference>
<dbReference type="SUPFAM" id="SSF54928">
    <property type="entry name" value="RNA-binding domain, RBD"/>
    <property type="match status" value="3"/>
</dbReference>
<dbReference type="PROSITE" id="PS50102">
    <property type="entry name" value="RRM"/>
    <property type="match status" value="3"/>
</dbReference>